<evidence type="ECO:0000250" key="1"/>
<evidence type="ECO:0000305" key="2"/>
<sequence length="414" mass="47376">MTRHDAQLYELKKKIEELKKIRGRGTELISLYIPAGYDLSKVMQQLREEYSTAQNIKSKTTRKNVLGALERAMQHLKLYKQTPENGLALFVGNVSEMEGNTDIRLWAIVPPEPLNVRLYRCDQTFVTEPLEEMLRVKDAYGLITVEKNEATIGLLRGKRIEVLDELTSNVPGKTRAGGQSARRYERIREQETHEFMKRIGEHANRVFLPLLEKGELKGIIVGGPGPTKEDFVEGDYLHHELKKKIIGVVDISYHGEYGLRELVEKASDILRDHEVIREKKLVNEFLKHVVKDTGLATYGEREVRRALEIGAVDTLLISEGYDKVRVRAKCNHCGWEELKTMSEEEFEVYKKKLTRCPKCGSQNLTIEKWDVAEELIKMAEEAGSDVEIISLDTEEGQQFYRAFGGLGAILRFKI</sequence>
<name>RF1_PYRAB</name>
<comment type="function">
    <text evidence="1">Directs the termination of nascent peptide synthesis (translation) in response to the termination codons UAA, UAG and UGA.</text>
</comment>
<comment type="subunit">
    <text evidence="1">Heterodimer of two subunits, one of which binds GTP.</text>
</comment>
<comment type="subcellular location">
    <subcellularLocation>
        <location evidence="2">Cytoplasm</location>
    </subcellularLocation>
</comment>
<comment type="similarity">
    <text evidence="2">Belongs to the eukaryotic release factor 1 family.</text>
</comment>
<comment type="sequence caution" evidence="2">
    <conflict type="erroneous initiation">
        <sequence resource="EMBL-CDS" id="CAB49500"/>
    </conflict>
    <text>Extended N-terminus.</text>
</comment>
<organism>
    <name type="scientific">Pyrococcus abyssi (strain GE5 / Orsay)</name>
    <dbReference type="NCBI Taxonomy" id="272844"/>
    <lineage>
        <taxon>Archaea</taxon>
        <taxon>Methanobacteriati</taxon>
        <taxon>Methanobacteriota</taxon>
        <taxon>Thermococci</taxon>
        <taxon>Thermococcales</taxon>
        <taxon>Thermococcaceae</taxon>
        <taxon>Pyrococcus</taxon>
    </lineage>
</organism>
<dbReference type="EMBL" id="AJ248284">
    <property type="protein sequence ID" value="CAB49500.1"/>
    <property type="status" value="ALT_INIT"/>
    <property type="molecule type" value="Genomic_DNA"/>
</dbReference>
<dbReference type="EMBL" id="HE613800">
    <property type="protein sequence ID" value="CCE69970.1"/>
    <property type="molecule type" value="Genomic_DNA"/>
</dbReference>
<dbReference type="PIR" id="E75177">
    <property type="entry name" value="E75177"/>
</dbReference>
<dbReference type="RefSeq" id="WP_048146580.1">
    <property type="nucleotide sequence ID" value="NC_000868.1"/>
</dbReference>
<dbReference type="SMR" id="Q9V151"/>
<dbReference type="STRING" id="272844.PAB0396"/>
<dbReference type="KEGG" id="pab:PAB0396"/>
<dbReference type="PATRIC" id="fig|272844.11.peg.616"/>
<dbReference type="eggNOG" id="arCOG01742">
    <property type="taxonomic scope" value="Archaea"/>
</dbReference>
<dbReference type="HOGENOM" id="CLU_035759_3_0_2"/>
<dbReference type="OrthoDB" id="1011at2157"/>
<dbReference type="Proteomes" id="UP000000810">
    <property type="component" value="Chromosome"/>
</dbReference>
<dbReference type="Proteomes" id="UP000009139">
    <property type="component" value="Chromosome"/>
</dbReference>
<dbReference type="GO" id="GO:0005737">
    <property type="term" value="C:cytoplasm"/>
    <property type="evidence" value="ECO:0007669"/>
    <property type="project" value="UniProtKB-SubCell"/>
</dbReference>
<dbReference type="GO" id="GO:0016149">
    <property type="term" value="F:translation release factor activity, codon specific"/>
    <property type="evidence" value="ECO:0007669"/>
    <property type="project" value="UniProtKB-UniRule"/>
</dbReference>
<dbReference type="FunFam" id="3.30.1330.30:FF:000032">
    <property type="entry name" value="Eukaryotic peptide chain release factor subunit 1"/>
    <property type="match status" value="1"/>
</dbReference>
<dbReference type="FunFam" id="3.30.420.60:FF:000003">
    <property type="entry name" value="Peptide chain release factor subunit 1"/>
    <property type="match status" value="1"/>
</dbReference>
<dbReference type="FunFam" id="3.30.960.10:FF:000003">
    <property type="entry name" value="Peptide chain release factor subunit 1"/>
    <property type="match status" value="1"/>
</dbReference>
<dbReference type="Gene3D" id="3.30.1330.30">
    <property type="match status" value="1"/>
</dbReference>
<dbReference type="Gene3D" id="3.30.960.10">
    <property type="entry name" value="eRF1 domain 1"/>
    <property type="match status" value="1"/>
</dbReference>
<dbReference type="Gene3D" id="3.30.420.60">
    <property type="entry name" value="eRF1 domain 2"/>
    <property type="match status" value="1"/>
</dbReference>
<dbReference type="HAMAP" id="MF_00424">
    <property type="entry name" value="Rel_fact_arch_1"/>
    <property type="match status" value="1"/>
</dbReference>
<dbReference type="InterPro" id="IPR042226">
    <property type="entry name" value="eFR1_2_sf"/>
</dbReference>
<dbReference type="InterPro" id="IPR005140">
    <property type="entry name" value="eRF1_1_Pelota"/>
</dbReference>
<dbReference type="InterPro" id="IPR024049">
    <property type="entry name" value="eRF1_1_sf"/>
</dbReference>
<dbReference type="InterPro" id="IPR005141">
    <property type="entry name" value="eRF1_2"/>
</dbReference>
<dbReference type="InterPro" id="IPR005142">
    <property type="entry name" value="eRF1_3"/>
</dbReference>
<dbReference type="InterPro" id="IPR020918">
    <property type="entry name" value="Peptide_chain-rel_aRF1"/>
</dbReference>
<dbReference type="InterPro" id="IPR004403">
    <property type="entry name" value="Peptide_chain-rel_eRF1/aRF1"/>
</dbReference>
<dbReference type="InterPro" id="IPR029064">
    <property type="entry name" value="Ribosomal_eL30-like_sf"/>
</dbReference>
<dbReference type="NCBIfam" id="TIGR03676">
    <property type="entry name" value="aRF1_eRF1"/>
    <property type="match status" value="1"/>
</dbReference>
<dbReference type="PANTHER" id="PTHR10113">
    <property type="entry name" value="PEPTIDE CHAIN RELEASE FACTOR SUBUNIT 1"/>
    <property type="match status" value="1"/>
</dbReference>
<dbReference type="Pfam" id="PF03463">
    <property type="entry name" value="eRF1_1"/>
    <property type="match status" value="1"/>
</dbReference>
<dbReference type="Pfam" id="PF03464">
    <property type="entry name" value="eRF1_2"/>
    <property type="match status" value="1"/>
</dbReference>
<dbReference type="Pfam" id="PF03465">
    <property type="entry name" value="eRF1_3"/>
    <property type="match status" value="1"/>
</dbReference>
<dbReference type="SMART" id="SM01194">
    <property type="entry name" value="eRF1_1"/>
    <property type="match status" value="1"/>
</dbReference>
<dbReference type="SUPFAM" id="SSF55315">
    <property type="entry name" value="L30e-like"/>
    <property type="match status" value="1"/>
</dbReference>
<dbReference type="SUPFAM" id="SSF55481">
    <property type="entry name" value="N-terminal domain of eukaryotic peptide chain release factor subunit 1, ERF1"/>
    <property type="match status" value="1"/>
</dbReference>
<dbReference type="SUPFAM" id="SSF53137">
    <property type="entry name" value="Translational machinery components"/>
    <property type="match status" value="1"/>
</dbReference>
<keyword id="KW-0963">Cytoplasm</keyword>
<keyword id="KW-0648">Protein biosynthesis</keyword>
<accession>Q9V151</accession>
<accession>G8ZJ43</accession>
<protein>
    <recommendedName>
        <fullName>Peptide chain release factor subunit 1</fullName>
    </recommendedName>
    <alternativeName>
        <fullName>Translation termination factor aRF1</fullName>
    </alternativeName>
</protein>
<feature type="chain" id="PRO_0000143180" description="Peptide chain release factor subunit 1">
    <location>
        <begin position="1"/>
        <end position="414"/>
    </location>
</feature>
<gene>
    <name type="primary">prf1</name>
    <name type="ordered locus">PYRAB05780</name>
    <name type="ORF">PAB0396</name>
</gene>
<proteinExistence type="inferred from homology"/>
<reference key="1">
    <citation type="journal article" date="2003" name="Mol. Microbiol.">
        <title>An integrated analysis of the genome of the hyperthermophilic archaeon Pyrococcus abyssi.</title>
        <authorList>
            <person name="Cohen G.N."/>
            <person name="Barbe V."/>
            <person name="Flament D."/>
            <person name="Galperin M."/>
            <person name="Heilig R."/>
            <person name="Lecompte O."/>
            <person name="Poch O."/>
            <person name="Prieur D."/>
            <person name="Querellou J."/>
            <person name="Ripp R."/>
            <person name="Thierry J.-C."/>
            <person name="Van der Oost J."/>
            <person name="Weissenbach J."/>
            <person name="Zivanovic Y."/>
            <person name="Forterre P."/>
        </authorList>
    </citation>
    <scope>NUCLEOTIDE SEQUENCE [LARGE SCALE GENOMIC DNA]</scope>
    <source>
        <strain>GE5 / Orsay</strain>
    </source>
</reference>
<reference key="2">
    <citation type="journal article" date="2012" name="Curr. Microbiol.">
        <title>Re-annotation of two hyperthermophilic archaea Pyrococcus abyssi GE5 and Pyrococcus furiosus DSM 3638.</title>
        <authorList>
            <person name="Gao J."/>
            <person name="Wang J."/>
        </authorList>
    </citation>
    <scope>GENOME REANNOTATION</scope>
    <source>
        <strain>GE5 / Orsay</strain>
    </source>
</reference>